<reference key="1">
    <citation type="journal article" date="2004" name="J. Mol. Microbiol. Biotechnol.">
        <title>The complete genome sequence of Bacillus licheniformis DSM13, an organism with great industrial potential.</title>
        <authorList>
            <person name="Veith B."/>
            <person name="Herzberg C."/>
            <person name="Steckel S."/>
            <person name="Feesche J."/>
            <person name="Maurer K.H."/>
            <person name="Ehrenreich P."/>
            <person name="Baeumer S."/>
            <person name="Henne A."/>
            <person name="Liesegang H."/>
            <person name="Merkl R."/>
            <person name="Ehrenreich A."/>
            <person name="Gottschalk G."/>
        </authorList>
    </citation>
    <scope>NUCLEOTIDE SEQUENCE [LARGE SCALE GENOMIC DNA]</scope>
    <source>
        <strain>ATCC 14580 / DSM 13 / JCM 2505 / CCUG 7422 / NBRC 12200 / NCIMB 9375 / NCTC 10341 / NRRL NRS-1264 / Gibson 46</strain>
    </source>
</reference>
<reference key="2">
    <citation type="journal article" date="2004" name="Genome Biol.">
        <title>Complete genome sequence of the industrial bacterium Bacillus licheniformis and comparisons with closely related Bacillus species.</title>
        <authorList>
            <person name="Rey M.W."/>
            <person name="Ramaiya P."/>
            <person name="Nelson B.A."/>
            <person name="Brody-Karpin S.D."/>
            <person name="Zaretsky E.J."/>
            <person name="Tang M."/>
            <person name="Lopez de Leon A."/>
            <person name="Xiang H."/>
            <person name="Gusti V."/>
            <person name="Clausen I.G."/>
            <person name="Olsen P.B."/>
            <person name="Rasmussen M.D."/>
            <person name="Andersen J.T."/>
            <person name="Joergensen P.L."/>
            <person name="Larsen T.S."/>
            <person name="Sorokin A."/>
            <person name="Bolotin A."/>
            <person name="Lapidus A."/>
            <person name="Galleron N."/>
            <person name="Ehrlich S.D."/>
            <person name="Berka R.M."/>
        </authorList>
    </citation>
    <scope>NUCLEOTIDE SEQUENCE [LARGE SCALE GENOMIC DNA]</scope>
    <source>
        <strain>ATCC 14580 / DSM 13 / JCM 2505 / CCUG 7422 / NBRC 12200 / NCIMB 9375 / NCTC 10341 / NRRL NRS-1264 / Gibson 46</strain>
    </source>
</reference>
<evidence type="ECO:0000255" key="1">
    <source>
        <dbReference type="HAMAP-Rule" id="MF_00436"/>
    </source>
</evidence>
<evidence type="ECO:0000255" key="2">
    <source>
        <dbReference type="PROSITE-ProRule" id="PRU01346"/>
    </source>
</evidence>
<sequence>MKSINIQDQFLNQIRKENTFVTVFLLNGFQLRGQVKGFDNFTVLIESEGKQQLIYKHAISTFAPQKNVQLELE</sequence>
<gene>
    <name evidence="1" type="primary">hfq</name>
    <name type="ordered locus">BLi01962</name>
    <name type="ordered locus">BL05175</name>
</gene>
<comment type="function">
    <text evidence="1">RNA chaperone that binds small regulatory RNA (sRNAs) and mRNAs to facilitate mRNA translational regulation in response to envelope stress, environmental stress and changes in metabolite concentrations. Also binds with high specificity to tRNAs.</text>
</comment>
<comment type="subunit">
    <text evidence="1">Homohexamer.</text>
</comment>
<comment type="similarity">
    <text evidence="1">Belongs to the Hfq family.</text>
</comment>
<feature type="chain" id="PRO_0000265138" description="RNA-binding protein Hfq">
    <location>
        <begin position="1"/>
        <end position="73"/>
    </location>
</feature>
<feature type="domain" description="Sm" evidence="2">
    <location>
        <begin position="8"/>
        <end position="68"/>
    </location>
</feature>
<proteinExistence type="inferred from homology"/>
<name>HFQ_BACLD</name>
<keyword id="KW-1185">Reference proteome</keyword>
<keyword id="KW-0694">RNA-binding</keyword>
<keyword id="KW-0346">Stress response</keyword>
<organism>
    <name type="scientific">Bacillus licheniformis (strain ATCC 14580 / DSM 13 / JCM 2505 / CCUG 7422 / NBRC 12200 / NCIMB 9375 / NCTC 10341 / NRRL NRS-1264 / Gibson 46)</name>
    <dbReference type="NCBI Taxonomy" id="279010"/>
    <lineage>
        <taxon>Bacteria</taxon>
        <taxon>Bacillati</taxon>
        <taxon>Bacillota</taxon>
        <taxon>Bacilli</taxon>
        <taxon>Bacillales</taxon>
        <taxon>Bacillaceae</taxon>
        <taxon>Bacillus</taxon>
    </lineage>
</organism>
<accession>Q65JA8</accession>
<accession>Q62UR5</accession>
<protein>
    <recommendedName>
        <fullName evidence="1">RNA-binding protein Hfq</fullName>
    </recommendedName>
</protein>
<dbReference type="EMBL" id="AE017333">
    <property type="protein sequence ID" value="AAU40856.1"/>
    <property type="molecule type" value="Genomic_DNA"/>
</dbReference>
<dbReference type="EMBL" id="CP000002">
    <property type="protein sequence ID" value="AAU23494.1"/>
    <property type="molecule type" value="Genomic_DNA"/>
</dbReference>
<dbReference type="RefSeq" id="WP_003182047.1">
    <property type="nucleotide sequence ID" value="NC_006322.1"/>
</dbReference>
<dbReference type="SMR" id="Q65JA8"/>
<dbReference type="STRING" id="279010.BL05175"/>
<dbReference type="GeneID" id="92861445"/>
<dbReference type="KEGG" id="bld:BLi01962"/>
<dbReference type="KEGG" id="bli:BL05175"/>
<dbReference type="eggNOG" id="COG1923">
    <property type="taxonomic scope" value="Bacteria"/>
</dbReference>
<dbReference type="HOGENOM" id="CLU_113688_0_2_9"/>
<dbReference type="Proteomes" id="UP000000606">
    <property type="component" value="Chromosome"/>
</dbReference>
<dbReference type="GO" id="GO:0005829">
    <property type="term" value="C:cytosol"/>
    <property type="evidence" value="ECO:0007669"/>
    <property type="project" value="TreeGrafter"/>
</dbReference>
<dbReference type="GO" id="GO:0003723">
    <property type="term" value="F:RNA binding"/>
    <property type="evidence" value="ECO:0007669"/>
    <property type="project" value="UniProtKB-UniRule"/>
</dbReference>
<dbReference type="GO" id="GO:0006355">
    <property type="term" value="P:regulation of DNA-templated transcription"/>
    <property type="evidence" value="ECO:0007669"/>
    <property type="project" value="InterPro"/>
</dbReference>
<dbReference type="GO" id="GO:0043487">
    <property type="term" value="P:regulation of RNA stability"/>
    <property type="evidence" value="ECO:0007669"/>
    <property type="project" value="TreeGrafter"/>
</dbReference>
<dbReference type="GO" id="GO:0045974">
    <property type="term" value="P:regulation of translation, ncRNA-mediated"/>
    <property type="evidence" value="ECO:0007669"/>
    <property type="project" value="TreeGrafter"/>
</dbReference>
<dbReference type="CDD" id="cd01716">
    <property type="entry name" value="Hfq"/>
    <property type="match status" value="1"/>
</dbReference>
<dbReference type="FunFam" id="2.30.30.100:FF:000012">
    <property type="entry name" value="RNA-binding protein Hfq"/>
    <property type="match status" value="1"/>
</dbReference>
<dbReference type="Gene3D" id="2.30.30.100">
    <property type="match status" value="1"/>
</dbReference>
<dbReference type="HAMAP" id="MF_00436">
    <property type="entry name" value="Hfq"/>
    <property type="match status" value="1"/>
</dbReference>
<dbReference type="InterPro" id="IPR005001">
    <property type="entry name" value="Hfq"/>
</dbReference>
<dbReference type="InterPro" id="IPR010920">
    <property type="entry name" value="LSM_dom_sf"/>
</dbReference>
<dbReference type="InterPro" id="IPR047575">
    <property type="entry name" value="Sm"/>
</dbReference>
<dbReference type="NCBIfam" id="TIGR02383">
    <property type="entry name" value="Hfq"/>
    <property type="match status" value="1"/>
</dbReference>
<dbReference type="NCBIfam" id="NF001602">
    <property type="entry name" value="PRK00395.1"/>
    <property type="match status" value="1"/>
</dbReference>
<dbReference type="PANTHER" id="PTHR34772">
    <property type="entry name" value="RNA-BINDING PROTEIN HFQ"/>
    <property type="match status" value="1"/>
</dbReference>
<dbReference type="PANTHER" id="PTHR34772:SF1">
    <property type="entry name" value="RNA-BINDING PROTEIN HFQ"/>
    <property type="match status" value="1"/>
</dbReference>
<dbReference type="Pfam" id="PF17209">
    <property type="entry name" value="Hfq"/>
    <property type="match status" value="1"/>
</dbReference>
<dbReference type="SUPFAM" id="SSF50182">
    <property type="entry name" value="Sm-like ribonucleoproteins"/>
    <property type="match status" value="1"/>
</dbReference>
<dbReference type="PROSITE" id="PS52002">
    <property type="entry name" value="SM"/>
    <property type="match status" value="1"/>
</dbReference>